<sequence>MNIQSILSDKIKQAMVIAGADQSCDALVRQSGKPQFGDYQANGIMAAAKKLGLNPREFAQKVLDNLQLSDIAEKLEIAGPGFINIFLNPTWLTTEISAALSHKNLGIQATNKQTVVIDYSSPNVAKEMHVGHLRSTIIGDAVARTLEFLGHNVIRANHVGDWGTQFGMLIAYLEKMQNEHASEMELQDLEAFYREAKKHYDEDEIFAEKARNYVVKLQGGDEYCRAMWKRLVDITMQQNQHNYDRLNVTLTEKDVMGESLYNPMLPSIVEDLKKQGLAVEDDGALVVYLDEFKNKEGDPMGVIVQKKDGGFLYTTTDIAAAKYRYETLKANRALVFSDTRQSQHMQQAWLITRKAGYVPDSFSLEHKNFGMMLGKDGKPFKTRTGGTVKLADLLDEAIERATVLINEKNTNLSNDEKQAVIEAIGIGSVKYADLSKNRTTDYVFDWDNMLSFEGNTAPYMQYAYTRIRSIFNKTEINSTALLAAPLTIKDDKERTLAIKLLQFEEAVQTVGKEGTPHVLCAYLYELAGIFSSFYEHCPILNAEDEAVKLSRLKLALLTEKTLKQGLELLGIKTVEKM</sequence>
<feature type="chain" id="PRO_1000018035" description="Arginine--tRNA ligase">
    <location>
        <begin position="1"/>
        <end position="577"/>
    </location>
</feature>
<feature type="short sequence motif" description="'HIGH' region">
    <location>
        <begin position="122"/>
        <end position="132"/>
    </location>
</feature>
<comment type="catalytic activity">
    <reaction evidence="1">
        <text>tRNA(Arg) + L-arginine + ATP = L-arginyl-tRNA(Arg) + AMP + diphosphate</text>
        <dbReference type="Rhea" id="RHEA:20301"/>
        <dbReference type="Rhea" id="RHEA-COMP:9658"/>
        <dbReference type="Rhea" id="RHEA-COMP:9673"/>
        <dbReference type="ChEBI" id="CHEBI:30616"/>
        <dbReference type="ChEBI" id="CHEBI:32682"/>
        <dbReference type="ChEBI" id="CHEBI:33019"/>
        <dbReference type="ChEBI" id="CHEBI:78442"/>
        <dbReference type="ChEBI" id="CHEBI:78513"/>
        <dbReference type="ChEBI" id="CHEBI:456215"/>
        <dbReference type="EC" id="6.1.1.19"/>
    </reaction>
</comment>
<comment type="subunit">
    <text evidence="1">Monomer.</text>
</comment>
<comment type="subcellular location">
    <subcellularLocation>
        <location evidence="1">Cytoplasm</location>
    </subcellularLocation>
</comment>
<comment type="similarity">
    <text evidence="1">Belongs to the class-I aminoacyl-tRNA synthetase family.</text>
</comment>
<dbReference type="EC" id="6.1.1.19" evidence="1"/>
<dbReference type="EMBL" id="CP000671">
    <property type="protein sequence ID" value="ABQ98472.1"/>
    <property type="molecule type" value="Genomic_DNA"/>
</dbReference>
<dbReference type="SMR" id="A5UCH1"/>
<dbReference type="KEGG" id="hip:CGSHiEE_05515"/>
<dbReference type="HOGENOM" id="CLU_006406_5_1_6"/>
<dbReference type="GO" id="GO:0005737">
    <property type="term" value="C:cytoplasm"/>
    <property type="evidence" value="ECO:0007669"/>
    <property type="project" value="UniProtKB-SubCell"/>
</dbReference>
<dbReference type="GO" id="GO:0004814">
    <property type="term" value="F:arginine-tRNA ligase activity"/>
    <property type="evidence" value="ECO:0007669"/>
    <property type="project" value="UniProtKB-UniRule"/>
</dbReference>
<dbReference type="GO" id="GO:0005524">
    <property type="term" value="F:ATP binding"/>
    <property type="evidence" value="ECO:0007669"/>
    <property type="project" value="UniProtKB-UniRule"/>
</dbReference>
<dbReference type="GO" id="GO:0006420">
    <property type="term" value="P:arginyl-tRNA aminoacylation"/>
    <property type="evidence" value="ECO:0007669"/>
    <property type="project" value="UniProtKB-UniRule"/>
</dbReference>
<dbReference type="CDD" id="cd07956">
    <property type="entry name" value="Anticodon_Ia_Arg"/>
    <property type="match status" value="1"/>
</dbReference>
<dbReference type="CDD" id="cd00671">
    <property type="entry name" value="ArgRS_core"/>
    <property type="match status" value="1"/>
</dbReference>
<dbReference type="FunFam" id="1.10.730.10:FF:000001">
    <property type="entry name" value="Arginine--tRNA ligase"/>
    <property type="match status" value="1"/>
</dbReference>
<dbReference type="FunFam" id="3.30.1360.70:FF:000001">
    <property type="entry name" value="Arginine--tRNA ligase"/>
    <property type="match status" value="1"/>
</dbReference>
<dbReference type="FunFam" id="3.40.50.620:FF:000030">
    <property type="entry name" value="Arginine--tRNA ligase"/>
    <property type="match status" value="1"/>
</dbReference>
<dbReference type="Gene3D" id="3.30.1360.70">
    <property type="entry name" value="Arginyl tRNA synthetase N-terminal domain"/>
    <property type="match status" value="1"/>
</dbReference>
<dbReference type="Gene3D" id="3.40.50.620">
    <property type="entry name" value="HUPs"/>
    <property type="match status" value="1"/>
</dbReference>
<dbReference type="Gene3D" id="1.10.730.10">
    <property type="entry name" value="Isoleucyl-tRNA Synthetase, Domain 1"/>
    <property type="match status" value="1"/>
</dbReference>
<dbReference type="HAMAP" id="MF_00123">
    <property type="entry name" value="Arg_tRNA_synth"/>
    <property type="match status" value="1"/>
</dbReference>
<dbReference type="InterPro" id="IPR001412">
    <property type="entry name" value="aa-tRNA-synth_I_CS"/>
</dbReference>
<dbReference type="InterPro" id="IPR001278">
    <property type="entry name" value="Arg-tRNA-ligase"/>
</dbReference>
<dbReference type="InterPro" id="IPR005148">
    <property type="entry name" value="Arg-tRNA-synth_N"/>
</dbReference>
<dbReference type="InterPro" id="IPR036695">
    <property type="entry name" value="Arg-tRNA-synth_N_sf"/>
</dbReference>
<dbReference type="InterPro" id="IPR035684">
    <property type="entry name" value="ArgRS_core"/>
</dbReference>
<dbReference type="InterPro" id="IPR008909">
    <property type="entry name" value="DALR_anticod-bd"/>
</dbReference>
<dbReference type="InterPro" id="IPR014729">
    <property type="entry name" value="Rossmann-like_a/b/a_fold"/>
</dbReference>
<dbReference type="InterPro" id="IPR009080">
    <property type="entry name" value="tRNAsynth_Ia_anticodon-bd"/>
</dbReference>
<dbReference type="NCBIfam" id="TIGR00456">
    <property type="entry name" value="argS"/>
    <property type="match status" value="1"/>
</dbReference>
<dbReference type="PANTHER" id="PTHR11956:SF5">
    <property type="entry name" value="ARGININE--TRNA LIGASE, CYTOPLASMIC"/>
    <property type="match status" value="1"/>
</dbReference>
<dbReference type="PANTHER" id="PTHR11956">
    <property type="entry name" value="ARGINYL-TRNA SYNTHETASE"/>
    <property type="match status" value="1"/>
</dbReference>
<dbReference type="Pfam" id="PF03485">
    <property type="entry name" value="Arg_tRNA_synt_N"/>
    <property type="match status" value="1"/>
</dbReference>
<dbReference type="Pfam" id="PF05746">
    <property type="entry name" value="DALR_1"/>
    <property type="match status" value="1"/>
</dbReference>
<dbReference type="Pfam" id="PF00750">
    <property type="entry name" value="tRNA-synt_1d"/>
    <property type="match status" value="1"/>
</dbReference>
<dbReference type="PRINTS" id="PR01038">
    <property type="entry name" value="TRNASYNTHARG"/>
</dbReference>
<dbReference type="SMART" id="SM01016">
    <property type="entry name" value="Arg_tRNA_synt_N"/>
    <property type="match status" value="1"/>
</dbReference>
<dbReference type="SMART" id="SM00836">
    <property type="entry name" value="DALR_1"/>
    <property type="match status" value="1"/>
</dbReference>
<dbReference type="SUPFAM" id="SSF47323">
    <property type="entry name" value="Anticodon-binding domain of a subclass of class I aminoacyl-tRNA synthetases"/>
    <property type="match status" value="1"/>
</dbReference>
<dbReference type="SUPFAM" id="SSF55190">
    <property type="entry name" value="Arginyl-tRNA synthetase (ArgRS), N-terminal 'additional' domain"/>
    <property type="match status" value="1"/>
</dbReference>
<dbReference type="SUPFAM" id="SSF52374">
    <property type="entry name" value="Nucleotidylyl transferase"/>
    <property type="match status" value="1"/>
</dbReference>
<dbReference type="PROSITE" id="PS00178">
    <property type="entry name" value="AA_TRNA_LIGASE_I"/>
    <property type="match status" value="1"/>
</dbReference>
<organism>
    <name type="scientific">Haemophilus influenzae (strain PittEE)</name>
    <dbReference type="NCBI Taxonomy" id="374930"/>
    <lineage>
        <taxon>Bacteria</taxon>
        <taxon>Pseudomonadati</taxon>
        <taxon>Pseudomonadota</taxon>
        <taxon>Gammaproteobacteria</taxon>
        <taxon>Pasteurellales</taxon>
        <taxon>Pasteurellaceae</taxon>
        <taxon>Haemophilus</taxon>
    </lineage>
</organism>
<gene>
    <name evidence="1" type="primary">argS</name>
    <name type="ordered locus">CGSHiEE_05515</name>
</gene>
<protein>
    <recommendedName>
        <fullName evidence="1">Arginine--tRNA ligase</fullName>
        <ecNumber evidence="1">6.1.1.19</ecNumber>
    </recommendedName>
    <alternativeName>
        <fullName evidence="1">Arginyl-tRNA synthetase</fullName>
        <shortName evidence="1">ArgRS</shortName>
    </alternativeName>
</protein>
<reference key="1">
    <citation type="journal article" date="2007" name="Genome Biol.">
        <title>Characterization and modeling of the Haemophilus influenzae core and supragenomes based on the complete genomic sequences of Rd and 12 clinical nontypeable strains.</title>
        <authorList>
            <person name="Hogg J.S."/>
            <person name="Hu F.Z."/>
            <person name="Janto B."/>
            <person name="Boissy R."/>
            <person name="Hayes J."/>
            <person name="Keefe R."/>
            <person name="Post J.C."/>
            <person name="Ehrlich G.D."/>
        </authorList>
    </citation>
    <scope>NUCLEOTIDE SEQUENCE [LARGE SCALE GENOMIC DNA]</scope>
    <source>
        <strain>PittEE</strain>
    </source>
</reference>
<keyword id="KW-0030">Aminoacyl-tRNA synthetase</keyword>
<keyword id="KW-0067">ATP-binding</keyword>
<keyword id="KW-0963">Cytoplasm</keyword>
<keyword id="KW-0436">Ligase</keyword>
<keyword id="KW-0547">Nucleotide-binding</keyword>
<keyword id="KW-0648">Protein biosynthesis</keyword>
<proteinExistence type="inferred from homology"/>
<name>SYR_HAEIE</name>
<accession>A5UCH1</accession>
<evidence type="ECO:0000255" key="1">
    <source>
        <dbReference type="HAMAP-Rule" id="MF_00123"/>
    </source>
</evidence>